<organism evidence="7">
    <name type="scientific">Akkermansia muciniphila (strain ATCC BAA-835 / DSM 22959 / JCM 33894 / BCRC 81048 / CCUG 64013 / CIP 107961 / Muc)</name>
    <dbReference type="NCBI Taxonomy" id="349741"/>
    <lineage>
        <taxon>Bacteria</taxon>
        <taxon>Pseudomonadati</taxon>
        <taxon>Verrucomicrobiota</taxon>
        <taxon>Verrucomicrobiia</taxon>
        <taxon>Verrucomicrobiales</taxon>
        <taxon>Akkermansiaceae</taxon>
        <taxon>Akkermansia</taxon>
    </lineage>
</organism>
<accession>B2UQG6</accession>
<keyword id="KW-0002">3D-structure</keyword>
<keyword id="KW-0119">Carbohydrate metabolism</keyword>
<keyword id="KW-0326">Glycosidase</keyword>
<keyword id="KW-0378">Hydrolase</keyword>
<keyword id="KW-0624">Polysaccharide degradation</keyword>
<keyword id="KW-1185">Reference proteome</keyword>
<keyword id="KW-0732">Signal</keyword>
<gene>
    <name evidence="7" type="ordered locus">Amuc_0868</name>
</gene>
<evidence type="ECO:0000255" key="1"/>
<evidence type="ECO:0000256" key="2">
    <source>
        <dbReference type="SAM" id="MobiDB-lite"/>
    </source>
</evidence>
<evidence type="ECO:0000269" key="3">
    <source>
    </source>
</evidence>
<evidence type="ECO:0000303" key="4">
    <source>
    </source>
</evidence>
<evidence type="ECO:0000305" key="5"/>
<evidence type="ECO:0000305" key="6">
    <source>
    </source>
</evidence>
<evidence type="ECO:0000312" key="7">
    <source>
        <dbReference type="EMBL" id="ACD04701.1"/>
    </source>
</evidence>
<evidence type="ECO:0000312" key="8">
    <source>
        <dbReference type="Proteomes" id="UP000001031"/>
    </source>
</evidence>
<evidence type="ECO:0007744" key="9">
    <source>
        <dbReference type="PDB" id="7CBN"/>
    </source>
</evidence>
<evidence type="ECO:0007744" key="10">
    <source>
        <dbReference type="PDB" id="7CBO"/>
    </source>
</evidence>
<evidence type="ECO:0007829" key="11">
    <source>
        <dbReference type="PDB" id="7CBO"/>
    </source>
</evidence>
<protein>
    <recommendedName>
        <fullName evidence="5">Beta-hexosaminidase Amuc_0868</fullName>
        <ecNumber evidence="3">3.2.1.52</ecNumber>
    </recommendedName>
    <alternativeName>
        <fullName evidence="4">Beta-N-acetylhexosaminidase Am0868</fullName>
    </alternativeName>
</protein>
<reference evidence="8" key="1">
    <citation type="journal article" date="2011" name="PLoS ONE">
        <title>The genome of Akkermansia muciniphila, a dedicated intestinal mucin degrader, and its use in exploring intestinal metagenomes.</title>
        <authorList>
            <person name="van Passel M.W."/>
            <person name="Kant R."/>
            <person name="Zoetendal E.G."/>
            <person name="Plugge C.M."/>
            <person name="Derrien M."/>
            <person name="Malfatti S.A."/>
            <person name="Chain P.S."/>
            <person name="Woyke T."/>
            <person name="Palva A."/>
            <person name="de Vos W.M."/>
            <person name="Smidt H."/>
        </authorList>
    </citation>
    <scope>NUCLEOTIDE SEQUENCE [LARGE SCALE GENOMIC DNA]</scope>
    <source>
        <strain>ATCC BAA-835 / DSM 22959 / JCM 33894 / BCRC 81048 / CCUG 64013 / CIP 107961 / Muc</strain>
    </source>
</reference>
<reference evidence="9 10" key="2">
    <citation type="journal article" date="2020" name="Biochem. Biophys. Res. Commun.">
        <title>Structural and biochemical analyses of beta-N-acetylhexosaminidase Am0868 from Akkermansia muciniphila involved in mucin degradation.</title>
        <authorList>
            <person name="Xu W."/>
            <person name="Yang W."/>
            <person name="Wang Y."/>
            <person name="Wang M."/>
            <person name="Zhang M."/>
        </authorList>
    </citation>
    <scope>X-RAY CRYSTALLOGRAPHY (1.50 ANGSTROMS) OF 29-549 AND IN COMPLEX WITH N-ACETYLGLUCOSAMINE</scope>
    <scope>FUNCTION</scope>
    <scope>CATALYTIC ACTIVITY</scope>
    <scope>SUBSTRATE SPECIFICITY</scope>
    <scope>ACTIVITY REGULATION</scope>
    <scope>BIOPHYSICOCHEMICAL PROPERTIES</scope>
    <scope>ACTIVE SITES</scope>
    <scope>MUTAGENESIS OF ASP-326 AND GLU-327</scope>
</reference>
<proteinExistence type="evidence at protein level"/>
<feature type="signal peptide" evidence="1">
    <location>
        <begin position="1"/>
        <end position="28"/>
    </location>
</feature>
<feature type="chain" id="PRO_5002783767" description="Beta-hexosaminidase Amuc_0868" evidence="1">
    <location>
        <begin position="29"/>
        <end position="549"/>
    </location>
</feature>
<feature type="region of interest" description="Disordered" evidence="2">
    <location>
        <begin position="526"/>
        <end position="549"/>
    </location>
</feature>
<feature type="active site" description="Charge relay system" evidence="6 10">
    <location>
        <position position="190"/>
    </location>
</feature>
<feature type="active site" description="Charge relay system" evidence="6 10">
    <location>
        <position position="260"/>
    </location>
</feature>
<feature type="active site" description="Charge relay system" evidence="6 10">
    <location>
        <position position="327"/>
    </location>
</feature>
<feature type="binding site" evidence="6 10">
    <location>
        <position position="161"/>
    </location>
    <ligand>
        <name>substrate</name>
    </ligand>
</feature>
<feature type="binding site" evidence="6 10">
    <location>
        <position position="326"/>
    </location>
    <ligand>
        <name>substrate</name>
    </ligand>
</feature>
<feature type="binding site" evidence="6 10">
    <location>
        <position position="393"/>
    </location>
    <ligand>
        <name>substrate</name>
    </ligand>
</feature>
<feature type="binding site" evidence="6 10">
    <location>
        <begin position="420"/>
        <end position="422"/>
    </location>
    <ligand>
        <name>substrate</name>
    </ligand>
</feature>
<feature type="binding site" evidence="6 10">
    <location>
        <begin position="474"/>
        <end position="476"/>
    </location>
    <ligand>
        <name>substrate</name>
    </ligand>
</feature>
<feature type="mutagenesis site" description="Specific activity is decreased by 99% with a 145-fold reduction in kcat/Km value compared to that of wild-type." evidence="3">
    <original>D</original>
    <variation>A</variation>
    <location>
        <position position="326"/>
    </location>
</feature>
<feature type="mutagenesis site" description="Specific activity is decreased by 86% with a 10-fold reduction in kcat/Km value compared to that of wild-type." evidence="3">
    <original>E</original>
    <variation>A</variation>
    <location>
        <position position="327"/>
    </location>
</feature>
<feature type="strand" evidence="11">
    <location>
        <begin position="37"/>
        <end position="42"/>
    </location>
</feature>
<feature type="strand" evidence="11">
    <location>
        <begin position="54"/>
        <end position="57"/>
    </location>
</feature>
<feature type="helix" evidence="11">
    <location>
        <begin position="62"/>
        <end position="72"/>
    </location>
</feature>
<feature type="strand" evidence="11">
    <location>
        <begin position="77"/>
        <end position="82"/>
    </location>
</feature>
<feature type="strand" evidence="11">
    <location>
        <begin position="85"/>
        <end position="90"/>
    </location>
</feature>
<feature type="helix" evidence="11">
    <location>
        <begin position="92"/>
        <end position="94"/>
    </location>
</feature>
<feature type="turn" evidence="11">
    <location>
        <begin position="95"/>
        <end position="97"/>
    </location>
</feature>
<feature type="strand" evidence="11">
    <location>
        <begin position="99"/>
        <end position="103"/>
    </location>
</feature>
<feature type="strand" evidence="11">
    <location>
        <begin position="108"/>
        <end position="114"/>
    </location>
</feature>
<feature type="helix" evidence="11">
    <location>
        <begin position="115"/>
        <end position="126"/>
    </location>
</feature>
<feature type="strand" evidence="11">
    <location>
        <begin position="137"/>
        <end position="139"/>
    </location>
</feature>
<feature type="strand" evidence="11">
    <location>
        <begin position="141"/>
        <end position="146"/>
    </location>
</feature>
<feature type="strand" evidence="11">
    <location>
        <begin position="151"/>
        <end position="158"/>
    </location>
</feature>
<feature type="turn" evidence="11">
    <location>
        <begin position="159"/>
        <end position="161"/>
    </location>
</feature>
<feature type="helix" evidence="11">
    <location>
        <begin position="166"/>
        <end position="178"/>
    </location>
</feature>
<feature type="strand" evidence="11">
    <location>
        <begin position="183"/>
        <end position="187"/>
    </location>
</feature>
<feature type="helix" evidence="11">
    <location>
        <begin position="203"/>
        <end position="206"/>
    </location>
</feature>
<feature type="turn" evidence="11">
    <location>
        <begin position="207"/>
        <end position="209"/>
    </location>
</feature>
<feature type="strand" evidence="11">
    <location>
        <begin position="210"/>
        <end position="212"/>
    </location>
</feature>
<feature type="strand" evidence="11">
    <location>
        <begin position="219"/>
        <end position="223"/>
    </location>
</feature>
<feature type="helix" evidence="11">
    <location>
        <begin position="234"/>
        <end position="245"/>
    </location>
</feature>
<feature type="turn" evidence="11">
    <location>
        <begin position="246"/>
        <end position="248"/>
    </location>
</feature>
<feature type="strand" evidence="11">
    <location>
        <begin position="250"/>
        <end position="260"/>
    </location>
</feature>
<feature type="helix" evidence="11">
    <location>
        <begin position="262"/>
        <end position="267"/>
    </location>
</feature>
<feature type="helix" evidence="11">
    <location>
        <begin position="269"/>
        <end position="271"/>
    </location>
</feature>
<feature type="helix" evidence="11">
    <location>
        <begin position="298"/>
        <end position="314"/>
    </location>
</feature>
<feature type="strand" evidence="11">
    <location>
        <begin position="319"/>
        <end position="324"/>
    </location>
</feature>
<feature type="helix" evidence="11">
    <location>
        <begin position="331"/>
        <end position="334"/>
    </location>
</feature>
<feature type="helix" evidence="11">
    <location>
        <begin position="337"/>
        <end position="345"/>
    </location>
</feature>
<feature type="helix" evidence="11">
    <location>
        <begin position="351"/>
        <end position="368"/>
    </location>
</feature>
<feature type="strand" evidence="11">
    <location>
        <begin position="372"/>
        <end position="376"/>
    </location>
</feature>
<feature type="helix" evidence="11">
    <location>
        <begin position="377"/>
        <end position="380"/>
    </location>
</feature>
<feature type="strand" evidence="11">
    <location>
        <begin position="389"/>
        <end position="392"/>
    </location>
</feature>
<feature type="helix" evidence="11">
    <location>
        <begin position="399"/>
        <end position="406"/>
    </location>
</feature>
<feature type="strand" evidence="11">
    <location>
        <begin position="411"/>
        <end position="413"/>
    </location>
</feature>
<feature type="turn" evidence="11">
    <location>
        <begin position="416"/>
        <end position="418"/>
    </location>
</feature>
<feature type="helix" evidence="11">
    <location>
        <begin position="433"/>
        <end position="435"/>
    </location>
</feature>
<feature type="helix" evidence="11">
    <location>
        <begin position="445"/>
        <end position="449"/>
    </location>
</feature>
<feature type="helix" evidence="11">
    <location>
        <begin position="460"/>
        <end position="465"/>
    </location>
</feature>
<feature type="strand" evidence="11">
    <location>
        <begin position="466"/>
        <end position="473"/>
    </location>
</feature>
<feature type="helix" evidence="11">
    <location>
        <begin position="481"/>
        <end position="488"/>
    </location>
</feature>
<feature type="helix" evidence="11">
    <location>
        <begin position="491"/>
        <end position="500"/>
    </location>
</feature>
<feature type="helix" evidence="11">
    <location>
        <begin position="503"/>
        <end position="505"/>
    </location>
</feature>
<feature type="helix" evidence="11">
    <location>
        <begin position="508"/>
        <end position="524"/>
    </location>
</feature>
<feature type="turn" evidence="11">
    <location>
        <begin position="532"/>
        <end position="534"/>
    </location>
</feature>
<feature type="strand" evidence="11">
    <location>
        <begin position="537"/>
        <end position="539"/>
    </location>
</feature>
<sequence length="549" mass="61830">MISKCTFSATVFSLFSLCWGAPSSPVLEAPHTIPLPAAMRVQTGESGFSLKNGVRLPEKNPLSRQAERIFRDNGINTALVKNNADIIFTEDASLGREGYRLAVTPDSISIASGSVNGTLYALQSLVQSIAADKNGAPALPRMDVKDQPRFSWRGLMVDSCRHMMPVRDIKKVLDLMERYKFNTLHWHLTDDQGWRLPIAKYPRLTTVGGARAQSPVIGNRNKGDGIPYSGHYTADEIRDVVRYARDRGITVIPEVEMPGHASAAIAAYPELGNTDIPGYEPRVQETWGVHSYTFSPTEKTFRFLEDVIDEICALFPDSPYIHIGGDEAPKNQWKQSPTAQRVMKDNGLANEHELQSYFIRRVEKMINNRGKRLIGWDEIQEGGLSPTATMMVWRSQMPHIAAQALAQGNDIVMTPNSHLYFDYDQGPGKPAAPEYETINNNQLTWQHVYGLEPVPQGTPREREKQVLGCQANIWTEYIPNLPKWEYHVFPRALALAEVAWTPQELKNEKDFRKRLDRQLPFLDARGVNYKRPDNGAPAQPKAVITRERR</sequence>
<name>H0868_AKKM8</name>
<comment type="function">
    <text evidence="3 5">Potentially capable of cleaving the specific glycoside linkages in the process of mucin degradation in human intestinal tract (Probable). Hydrolyzes chromogenic substrates pNP-beta-GlcNAc with high activity and pNP-beta-GalNAc to a lesser extent, but not pNP-beta-glucose or pNP-beta-galactose (PubMed:32819592).</text>
</comment>
<comment type="catalytic activity">
    <reaction evidence="3">
        <text>Hydrolysis of terminal non-reducing N-acetyl-D-hexosamine residues in N-acetyl-beta-D-hexosaminides.</text>
        <dbReference type="EC" id="3.2.1.52"/>
    </reaction>
</comment>
<comment type="activity regulation">
    <text evidence="3">Inhibited strongly by Cu(2+), Zn(2+), Cd(2+) and Ni(2+) ions. No effect on activity with Na(+), Li(+), K(+), Ca(2+), Mg(2+) or Mn(2+) ions.</text>
</comment>
<comment type="biophysicochemical properties">
    <kinetics>
        <KM evidence="3">0.297 mM for pNP-GlcNAc (at pH 7.0 and 37 degrees Celsius)</KM>
        <Vmax evidence="3">86.3 mmol/min/mg enzyme with pNP-GlcNAc as substrate (at pH 7.0 and 37 degrees Celsius)</Vmax>
        <text evidence="3">kcat is 51.39 sec(-1) and kcat/KM is 1.73 M(-1)sec(-1) with pNP-GlcNAc as substrate.</text>
    </kinetics>
    <phDependence>
        <text evidence="3">Optimum pH is approximately 7. Stable activity from pH 4.5 to 8.5. Retains more than 30% of activity at pH 9.0.</text>
    </phDependence>
    <temperatureDependence>
        <text evidence="3">Highest activity at 45 degrees Celsius. Has about 40% of activity at 55 degrees Celsius.</text>
    </temperatureDependence>
</comment>
<comment type="similarity">
    <text evidence="5">Belongs to the glycosyl hydrolase 20 family.</text>
</comment>
<dbReference type="EC" id="3.2.1.52" evidence="3"/>
<dbReference type="EMBL" id="CP001071">
    <property type="protein sequence ID" value="ACD04701.1"/>
    <property type="molecule type" value="Genomic_DNA"/>
</dbReference>
<dbReference type="RefSeq" id="WP_012419916.1">
    <property type="nucleotide sequence ID" value="NC_010655.1"/>
</dbReference>
<dbReference type="PDB" id="7CBN">
    <property type="method" value="X-ray"/>
    <property type="resolution" value="1.70 A"/>
    <property type="chains" value="A=29-549"/>
</dbReference>
<dbReference type="PDB" id="7CBO">
    <property type="method" value="X-ray"/>
    <property type="resolution" value="1.50 A"/>
    <property type="chains" value="A=29-549"/>
</dbReference>
<dbReference type="PDBsum" id="7CBN"/>
<dbReference type="PDBsum" id="7CBO"/>
<dbReference type="SMR" id="B2UQG6"/>
<dbReference type="STRING" id="349741.Amuc_0868"/>
<dbReference type="CAZy" id="GH20">
    <property type="family name" value="Glycoside Hydrolase Family 20"/>
</dbReference>
<dbReference type="PaxDb" id="349741-Amuc_0868"/>
<dbReference type="KEGG" id="amu:Amuc_0868"/>
<dbReference type="eggNOG" id="COG3525">
    <property type="taxonomic scope" value="Bacteria"/>
</dbReference>
<dbReference type="HOGENOM" id="CLU_007082_5_1_0"/>
<dbReference type="BioCyc" id="AMUC349741:G1GBX-940-MONOMER"/>
<dbReference type="SABIO-RK" id="B2UQG6"/>
<dbReference type="Proteomes" id="UP000001031">
    <property type="component" value="Chromosome"/>
</dbReference>
<dbReference type="GO" id="GO:0016020">
    <property type="term" value="C:membrane"/>
    <property type="evidence" value="ECO:0007669"/>
    <property type="project" value="TreeGrafter"/>
</dbReference>
<dbReference type="GO" id="GO:0004563">
    <property type="term" value="F:beta-N-acetylhexosaminidase activity"/>
    <property type="evidence" value="ECO:0007669"/>
    <property type="project" value="UniProtKB-EC"/>
</dbReference>
<dbReference type="GO" id="GO:0030203">
    <property type="term" value="P:glycosaminoglycan metabolic process"/>
    <property type="evidence" value="ECO:0007669"/>
    <property type="project" value="TreeGrafter"/>
</dbReference>
<dbReference type="GO" id="GO:0000272">
    <property type="term" value="P:polysaccharide catabolic process"/>
    <property type="evidence" value="ECO:0007669"/>
    <property type="project" value="UniProtKB-KW"/>
</dbReference>
<dbReference type="CDD" id="cd06563">
    <property type="entry name" value="GH20_chitobiase-like"/>
    <property type="match status" value="1"/>
</dbReference>
<dbReference type="Gene3D" id="3.30.379.10">
    <property type="entry name" value="Chitobiase/beta-hexosaminidase domain 2-like"/>
    <property type="match status" value="1"/>
</dbReference>
<dbReference type="Gene3D" id="3.20.20.80">
    <property type="entry name" value="Glycosidases"/>
    <property type="match status" value="1"/>
</dbReference>
<dbReference type="InterPro" id="IPR025705">
    <property type="entry name" value="Beta_hexosaminidase_sua/sub"/>
</dbReference>
<dbReference type="InterPro" id="IPR015883">
    <property type="entry name" value="Glyco_hydro_20_cat"/>
</dbReference>
<dbReference type="InterPro" id="IPR017853">
    <property type="entry name" value="Glycoside_hydrolase_SF"/>
</dbReference>
<dbReference type="InterPro" id="IPR029018">
    <property type="entry name" value="Hex-like_dom2"/>
</dbReference>
<dbReference type="InterPro" id="IPR015882">
    <property type="entry name" value="HEX_bac_N"/>
</dbReference>
<dbReference type="PANTHER" id="PTHR22600">
    <property type="entry name" value="BETA-HEXOSAMINIDASE"/>
    <property type="match status" value="1"/>
</dbReference>
<dbReference type="PANTHER" id="PTHR22600:SF57">
    <property type="entry name" value="BETA-N-ACETYLHEXOSAMINIDASE"/>
    <property type="match status" value="1"/>
</dbReference>
<dbReference type="Pfam" id="PF00728">
    <property type="entry name" value="Glyco_hydro_20"/>
    <property type="match status" value="1"/>
</dbReference>
<dbReference type="Pfam" id="PF02838">
    <property type="entry name" value="Glyco_hydro_20b"/>
    <property type="match status" value="1"/>
</dbReference>
<dbReference type="PIRSF" id="PIRSF001093">
    <property type="entry name" value="B-hxosamndse_ab_euk"/>
    <property type="match status" value="1"/>
</dbReference>
<dbReference type="PRINTS" id="PR00738">
    <property type="entry name" value="GLHYDRLASE20"/>
</dbReference>
<dbReference type="SUPFAM" id="SSF51445">
    <property type="entry name" value="(Trans)glycosidases"/>
    <property type="match status" value="1"/>
</dbReference>
<dbReference type="SUPFAM" id="SSF55545">
    <property type="entry name" value="beta-N-acetylhexosaminidase-like domain"/>
    <property type="match status" value="1"/>
</dbReference>